<proteinExistence type="inferred from homology"/>
<feature type="chain" id="PRO_1000023186" description="Thymidylate kinase">
    <location>
        <begin position="1"/>
        <end position="213"/>
    </location>
</feature>
<feature type="binding site" evidence="1">
    <location>
        <begin position="10"/>
        <end position="17"/>
    </location>
    <ligand>
        <name>ATP</name>
        <dbReference type="ChEBI" id="CHEBI:30616"/>
    </ligand>
</feature>
<evidence type="ECO:0000255" key="1">
    <source>
        <dbReference type="HAMAP-Rule" id="MF_00165"/>
    </source>
</evidence>
<sequence>MRSKYIVIEGLEGAGKTTARNVVVETLEQLGIRDMVFTREPGGTQLAEKLRSLVLDIKSVGDEVITDKAEVLMFYAARVQLVETVIKPALANGTWVIGDRHDLSTQAYQGGGRGIDQHMLATLRDAVLGGFRPDLTLYLDVTPEVGLKRARARGELDRIEQESFDFFNRTRARYLELAAQDKSIHTIDATQPLEAVMDAIRTTVTNWVKELDA</sequence>
<keyword id="KW-0067">ATP-binding</keyword>
<keyword id="KW-0418">Kinase</keyword>
<keyword id="KW-0545">Nucleotide biosynthesis</keyword>
<keyword id="KW-0547">Nucleotide-binding</keyword>
<keyword id="KW-1185">Reference proteome</keyword>
<keyword id="KW-0808">Transferase</keyword>
<accession>A1A9Z2</accession>
<protein>
    <recommendedName>
        <fullName evidence="1">Thymidylate kinase</fullName>
        <ecNumber evidence="1">2.7.4.9</ecNumber>
    </recommendedName>
    <alternativeName>
        <fullName evidence="1">dTMP kinase</fullName>
    </alternativeName>
</protein>
<reference key="1">
    <citation type="journal article" date="2007" name="J. Bacteriol.">
        <title>The genome sequence of avian pathogenic Escherichia coli strain O1:K1:H7 shares strong similarities with human extraintestinal pathogenic E. coli genomes.</title>
        <authorList>
            <person name="Johnson T.J."/>
            <person name="Kariyawasam S."/>
            <person name="Wannemuehler Y."/>
            <person name="Mangiamele P."/>
            <person name="Johnson S.J."/>
            <person name="Doetkott C."/>
            <person name="Skyberg J.A."/>
            <person name="Lynne A.M."/>
            <person name="Johnson J.R."/>
            <person name="Nolan L.K."/>
        </authorList>
    </citation>
    <scope>NUCLEOTIDE SEQUENCE [LARGE SCALE GENOMIC DNA]</scope>
</reference>
<gene>
    <name evidence="1" type="primary">tmk</name>
    <name type="ordered locus">Ecok1_09880</name>
    <name type="ORF">APECO1_179</name>
</gene>
<dbReference type="EC" id="2.7.4.9" evidence="1"/>
<dbReference type="EMBL" id="CP000468">
    <property type="protein sequence ID" value="ABJ00482.1"/>
    <property type="molecule type" value="Genomic_DNA"/>
</dbReference>
<dbReference type="RefSeq" id="WP_001257012.1">
    <property type="nucleotide sequence ID" value="NZ_CADILS010000019.1"/>
</dbReference>
<dbReference type="SMR" id="A1A9Z2"/>
<dbReference type="KEGG" id="ecv:APECO1_179"/>
<dbReference type="HOGENOM" id="CLU_049131_0_1_6"/>
<dbReference type="Proteomes" id="UP000008216">
    <property type="component" value="Chromosome"/>
</dbReference>
<dbReference type="GO" id="GO:0005829">
    <property type="term" value="C:cytosol"/>
    <property type="evidence" value="ECO:0007669"/>
    <property type="project" value="TreeGrafter"/>
</dbReference>
<dbReference type="GO" id="GO:0005524">
    <property type="term" value="F:ATP binding"/>
    <property type="evidence" value="ECO:0007669"/>
    <property type="project" value="UniProtKB-UniRule"/>
</dbReference>
<dbReference type="GO" id="GO:0004798">
    <property type="term" value="F:dTMP kinase activity"/>
    <property type="evidence" value="ECO:0007669"/>
    <property type="project" value="UniProtKB-UniRule"/>
</dbReference>
<dbReference type="GO" id="GO:0006233">
    <property type="term" value="P:dTDP biosynthetic process"/>
    <property type="evidence" value="ECO:0007669"/>
    <property type="project" value="InterPro"/>
</dbReference>
<dbReference type="GO" id="GO:0006235">
    <property type="term" value="P:dTTP biosynthetic process"/>
    <property type="evidence" value="ECO:0007669"/>
    <property type="project" value="UniProtKB-UniRule"/>
</dbReference>
<dbReference type="GO" id="GO:0006227">
    <property type="term" value="P:dUDP biosynthetic process"/>
    <property type="evidence" value="ECO:0007669"/>
    <property type="project" value="TreeGrafter"/>
</dbReference>
<dbReference type="CDD" id="cd01672">
    <property type="entry name" value="TMPK"/>
    <property type="match status" value="1"/>
</dbReference>
<dbReference type="FunFam" id="3.40.50.300:FF:000321">
    <property type="entry name" value="Thymidylate kinase"/>
    <property type="match status" value="1"/>
</dbReference>
<dbReference type="Gene3D" id="3.40.50.300">
    <property type="entry name" value="P-loop containing nucleotide triphosphate hydrolases"/>
    <property type="match status" value="1"/>
</dbReference>
<dbReference type="HAMAP" id="MF_00165">
    <property type="entry name" value="Thymidylate_kinase"/>
    <property type="match status" value="1"/>
</dbReference>
<dbReference type="InterPro" id="IPR027417">
    <property type="entry name" value="P-loop_NTPase"/>
</dbReference>
<dbReference type="InterPro" id="IPR039430">
    <property type="entry name" value="Thymidylate_kin-like_dom"/>
</dbReference>
<dbReference type="InterPro" id="IPR018095">
    <property type="entry name" value="Thymidylate_kin_CS"/>
</dbReference>
<dbReference type="InterPro" id="IPR018094">
    <property type="entry name" value="Thymidylate_kinase"/>
</dbReference>
<dbReference type="NCBIfam" id="TIGR00041">
    <property type="entry name" value="DTMP_kinase"/>
    <property type="match status" value="1"/>
</dbReference>
<dbReference type="PANTHER" id="PTHR10344">
    <property type="entry name" value="THYMIDYLATE KINASE"/>
    <property type="match status" value="1"/>
</dbReference>
<dbReference type="PANTHER" id="PTHR10344:SF4">
    <property type="entry name" value="UMP-CMP KINASE 2, MITOCHONDRIAL"/>
    <property type="match status" value="1"/>
</dbReference>
<dbReference type="Pfam" id="PF02223">
    <property type="entry name" value="Thymidylate_kin"/>
    <property type="match status" value="1"/>
</dbReference>
<dbReference type="SUPFAM" id="SSF52540">
    <property type="entry name" value="P-loop containing nucleoside triphosphate hydrolases"/>
    <property type="match status" value="1"/>
</dbReference>
<dbReference type="PROSITE" id="PS01331">
    <property type="entry name" value="THYMIDYLATE_KINASE"/>
    <property type="match status" value="1"/>
</dbReference>
<organism>
    <name type="scientific">Escherichia coli O1:K1 / APEC</name>
    <dbReference type="NCBI Taxonomy" id="405955"/>
    <lineage>
        <taxon>Bacteria</taxon>
        <taxon>Pseudomonadati</taxon>
        <taxon>Pseudomonadota</taxon>
        <taxon>Gammaproteobacteria</taxon>
        <taxon>Enterobacterales</taxon>
        <taxon>Enterobacteriaceae</taxon>
        <taxon>Escherichia</taxon>
    </lineage>
</organism>
<name>KTHY_ECOK1</name>
<comment type="function">
    <text evidence="1">Phosphorylation of dTMP to form dTDP in both de novo and salvage pathways of dTTP synthesis.</text>
</comment>
<comment type="catalytic activity">
    <reaction evidence="1">
        <text>dTMP + ATP = dTDP + ADP</text>
        <dbReference type="Rhea" id="RHEA:13517"/>
        <dbReference type="ChEBI" id="CHEBI:30616"/>
        <dbReference type="ChEBI" id="CHEBI:58369"/>
        <dbReference type="ChEBI" id="CHEBI:63528"/>
        <dbReference type="ChEBI" id="CHEBI:456216"/>
        <dbReference type="EC" id="2.7.4.9"/>
    </reaction>
</comment>
<comment type="similarity">
    <text evidence="1">Belongs to the thymidylate kinase family.</text>
</comment>